<accession>A5GQ35</accession>
<reference key="1">
    <citation type="submission" date="2006-05" db="EMBL/GenBank/DDBJ databases">
        <authorList>
            <consortium name="Genoscope"/>
        </authorList>
    </citation>
    <scope>NUCLEOTIDE SEQUENCE [LARGE SCALE GENOMIC DNA]</scope>
    <source>
        <strain>RCC307</strain>
    </source>
</reference>
<gene>
    <name evidence="1" type="primary">miaA</name>
    <name type="ordered locus">SynRCC307_0091</name>
</gene>
<organism>
    <name type="scientific">Synechococcus sp. (strain RCC307)</name>
    <dbReference type="NCBI Taxonomy" id="316278"/>
    <lineage>
        <taxon>Bacteria</taxon>
        <taxon>Bacillati</taxon>
        <taxon>Cyanobacteriota</taxon>
        <taxon>Cyanophyceae</taxon>
        <taxon>Synechococcales</taxon>
        <taxon>Synechococcaceae</taxon>
        <taxon>Synechococcus</taxon>
    </lineage>
</organism>
<name>MIAA_SYNR3</name>
<sequence length="296" mass="32461">MTPLMVLVLGPTASGKTSLGIALAQQLDCRVLSIDSRQLYAGMDIGTAKPTRDEQQQARHELLNLSTPDQPINLQQFCSHAQTLIEQEQQRGRPALLVGGSGLYLQALSQGLQPPALPPQTGLRQQLQQLGQSCCHQLLSQADPQAAAKIEPNDPVRTQRALEVLYGTGQTISSQQGRCPPACRVLELGLNPSDLKERIEQRTASLYARGLVAETETLSRRYGADLPLLQTIGYGEALAVLAGRLSESEAQALTSRRTWLFAKRQRTWFRNRHQPLWLNTESALEEALEAIAAARS</sequence>
<dbReference type="EC" id="2.5.1.75" evidence="1"/>
<dbReference type="EMBL" id="CT978603">
    <property type="protein sequence ID" value="CAK26994.1"/>
    <property type="molecule type" value="Genomic_DNA"/>
</dbReference>
<dbReference type="SMR" id="A5GQ35"/>
<dbReference type="STRING" id="316278.SynRCC307_0091"/>
<dbReference type="KEGG" id="syr:SynRCC307_0091"/>
<dbReference type="eggNOG" id="COG0324">
    <property type="taxonomic scope" value="Bacteria"/>
</dbReference>
<dbReference type="HOGENOM" id="CLU_032616_0_1_3"/>
<dbReference type="OrthoDB" id="9776390at2"/>
<dbReference type="Proteomes" id="UP000001115">
    <property type="component" value="Chromosome"/>
</dbReference>
<dbReference type="GO" id="GO:0005524">
    <property type="term" value="F:ATP binding"/>
    <property type="evidence" value="ECO:0007669"/>
    <property type="project" value="UniProtKB-UniRule"/>
</dbReference>
<dbReference type="GO" id="GO:0052381">
    <property type="term" value="F:tRNA dimethylallyltransferase activity"/>
    <property type="evidence" value="ECO:0007669"/>
    <property type="project" value="UniProtKB-UniRule"/>
</dbReference>
<dbReference type="GO" id="GO:0006400">
    <property type="term" value="P:tRNA modification"/>
    <property type="evidence" value="ECO:0007669"/>
    <property type="project" value="TreeGrafter"/>
</dbReference>
<dbReference type="Gene3D" id="1.10.20.140">
    <property type="match status" value="1"/>
</dbReference>
<dbReference type="Gene3D" id="3.40.50.300">
    <property type="entry name" value="P-loop containing nucleotide triphosphate hydrolases"/>
    <property type="match status" value="1"/>
</dbReference>
<dbReference type="HAMAP" id="MF_00185">
    <property type="entry name" value="IPP_trans"/>
    <property type="match status" value="1"/>
</dbReference>
<dbReference type="InterPro" id="IPR039657">
    <property type="entry name" value="Dimethylallyltransferase"/>
</dbReference>
<dbReference type="InterPro" id="IPR018022">
    <property type="entry name" value="IPT"/>
</dbReference>
<dbReference type="InterPro" id="IPR027417">
    <property type="entry name" value="P-loop_NTPase"/>
</dbReference>
<dbReference type="NCBIfam" id="TIGR00174">
    <property type="entry name" value="miaA"/>
    <property type="match status" value="1"/>
</dbReference>
<dbReference type="PANTHER" id="PTHR11088">
    <property type="entry name" value="TRNA DIMETHYLALLYLTRANSFERASE"/>
    <property type="match status" value="1"/>
</dbReference>
<dbReference type="PANTHER" id="PTHR11088:SF60">
    <property type="entry name" value="TRNA DIMETHYLALLYLTRANSFERASE"/>
    <property type="match status" value="1"/>
</dbReference>
<dbReference type="Pfam" id="PF01715">
    <property type="entry name" value="IPPT"/>
    <property type="match status" value="1"/>
</dbReference>
<dbReference type="SUPFAM" id="SSF52540">
    <property type="entry name" value="P-loop containing nucleoside triphosphate hydrolases"/>
    <property type="match status" value="1"/>
</dbReference>
<evidence type="ECO:0000255" key="1">
    <source>
        <dbReference type="HAMAP-Rule" id="MF_00185"/>
    </source>
</evidence>
<protein>
    <recommendedName>
        <fullName evidence="1">tRNA dimethylallyltransferase</fullName>
        <ecNumber evidence="1">2.5.1.75</ecNumber>
    </recommendedName>
    <alternativeName>
        <fullName evidence="1">Dimethylallyl diphosphate:tRNA dimethylallyltransferase</fullName>
        <shortName evidence="1">DMAPP:tRNA dimethylallyltransferase</shortName>
        <shortName evidence="1">DMATase</shortName>
    </alternativeName>
    <alternativeName>
        <fullName evidence="1">Isopentenyl-diphosphate:tRNA isopentenyltransferase</fullName>
        <shortName evidence="1">IPP transferase</shortName>
        <shortName evidence="1">IPPT</shortName>
        <shortName evidence="1">IPTase</shortName>
    </alternativeName>
</protein>
<keyword id="KW-0067">ATP-binding</keyword>
<keyword id="KW-0460">Magnesium</keyword>
<keyword id="KW-0547">Nucleotide-binding</keyword>
<keyword id="KW-1185">Reference proteome</keyword>
<keyword id="KW-0808">Transferase</keyword>
<keyword id="KW-0819">tRNA processing</keyword>
<comment type="function">
    <text evidence="1">Catalyzes the transfer of a dimethylallyl group onto the adenine at position 37 in tRNAs that read codons beginning with uridine, leading to the formation of N6-(dimethylallyl)adenosine (i(6)A).</text>
</comment>
<comment type="catalytic activity">
    <reaction evidence="1">
        <text>adenosine(37) in tRNA + dimethylallyl diphosphate = N(6)-dimethylallyladenosine(37) in tRNA + diphosphate</text>
        <dbReference type="Rhea" id="RHEA:26482"/>
        <dbReference type="Rhea" id="RHEA-COMP:10162"/>
        <dbReference type="Rhea" id="RHEA-COMP:10375"/>
        <dbReference type="ChEBI" id="CHEBI:33019"/>
        <dbReference type="ChEBI" id="CHEBI:57623"/>
        <dbReference type="ChEBI" id="CHEBI:74411"/>
        <dbReference type="ChEBI" id="CHEBI:74415"/>
        <dbReference type="EC" id="2.5.1.75"/>
    </reaction>
</comment>
<comment type="cofactor">
    <cofactor evidence="1">
        <name>Mg(2+)</name>
        <dbReference type="ChEBI" id="CHEBI:18420"/>
    </cofactor>
</comment>
<comment type="subunit">
    <text evidence="1">Monomer.</text>
</comment>
<comment type="similarity">
    <text evidence="1">Belongs to the IPP transferase family.</text>
</comment>
<proteinExistence type="inferred from homology"/>
<feature type="chain" id="PRO_0000377348" description="tRNA dimethylallyltransferase">
    <location>
        <begin position="1"/>
        <end position="296"/>
    </location>
</feature>
<feature type="region of interest" description="Interaction with substrate tRNA" evidence="1">
    <location>
        <begin position="35"/>
        <end position="38"/>
    </location>
</feature>
<feature type="binding site" evidence="1">
    <location>
        <begin position="10"/>
        <end position="17"/>
    </location>
    <ligand>
        <name>ATP</name>
        <dbReference type="ChEBI" id="CHEBI:30616"/>
    </ligand>
</feature>
<feature type="binding site" evidence="1">
    <location>
        <begin position="12"/>
        <end position="17"/>
    </location>
    <ligand>
        <name>substrate</name>
    </ligand>
</feature>
<feature type="site" description="Interaction with substrate tRNA" evidence="1">
    <location>
        <position position="101"/>
    </location>
</feature>